<reference key="1">
    <citation type="journal article" date="2007" name="Genome Biol.">
        <title>Genome analysis and genome-wide proteomics of Thermococcus gammatolerans, the most radioresistant organism known amongst the Archaea.</title>
        <authorList>
            <person name="Zivanovic Y."/>
            <person name="Armengaud J."/>
            <person name="Lagorce A."/>
            <person name="Leplat C."/>
            <person name="Guerin P."/>
            <person name="Dutertre M."/>
            <person name="Anthouard V."/>
            <person name="Forterre P."/>
            <person name="Wincker P."/>
            <person name="Confalonieri F."/>
        </authorList>
    </citation>
    <scope>NUCLEOTIDE SEQUENCE [LARGE SCALE GENOMIC DNA]</scope>
    <source>
        <strain>DSM 15229 / JCM 11827 / EJ3</strain>
    </source>
</reference>
<keyword id="KW-1185">Reference proteome</keyword>
<keyword id="KW-0687">Ribonucleoprotein</keyword>
<keyword id="KW-0689">Ribosomal protein</keyword>
<keyword id="KW-0694">RNA-binding</keyword>
<keyword id="KW-0699">rRNA-binding</keyword>
<dbReference type="EMBL" id="CP001398">
    <property type="protein sequence ID" value="ACS34489.1"/>
    <property type="molecule type" value="Genomic_DNA"/>
</dbReference>
<dbReference type="RefSeq" id="WP_015859593.1">
    <property type="nucleotide sequence ID" value="NC_012804.1"/>
</dbReference>
<dbReference type="SMR" id="C5A270"/>
<dbReference type="STRING" id="593117.TGAM_1987"/>
<dbReference type="PaxDb" id="593117-TGAM_1987"/>
<dbReference type="GeneID" id="7987044"/>
<dbReference type="KEGG" id="tga:TGAM_1987"/>
<dbReference type="PATRIC" id="fig|593117.10.peg.1997"/>
<dbReference type="eggNOG" id="arCOG04091">
    <property type="taxonomic scope" value="Archaea"/>
</dbReference>
<dbReference type="HOGENOM" id="CLU_098428_1_1_2"/>
<dbReference type="OrthoDB" id="5670at2157"/>
<dbReference type="Proteomes" id="UP000001488">
    <property type="component" value="Chromosome"/>
</dbReference>
<dbReference type="GO" id="GO:1990904">
    <property type="term" value="C:ribonucleoprotein complex"/>
    <property type="evidence" value="ECO:0007669"/>
    <property type="project" value="UniProtKB-KW"/>
</dbReference>
<dbReference type="GO" id="GO:0005840">
    <property type="term" value="C:ribosome"/>
    <property type="evidence" value="ECO:0007669"/>
    <property type="project" value="UniProtKB-KW"/>
</dbReference>
<dbReference type="GO" id="GO:0019843">
    <property type="term" value="F:rRNA binding"/>
    <property type="evidence" value="ECO:0007669"/>
    <property type="project" value="UniProtKB-UniRule"/>
</dbReference>
<dbReference type="GO" id="GO:0003735">
    <property type="term" value="F:structural constituent of ribosome"/>
    <property type="evidence" value="ECO:0007669"/>
    <property type="project" value="InterPro"/>
</dbReference>
<dbReference type="GO" id="GO:0006412">
    <property type="term" value="P:translation"/>
    <property type="evidence" value="ECO:0007669"/>
    <property type="project" value="UniProtKB-UniRule"/>
</dbReference>
<dbReference type="FunFam" id="3.30.1370.30:FF:000001">
    <property type="entry name" value="40S ribosomal protein S15a"/>
    <property type="match status" value="1"/>
</dbReference>
<dbReference type="FunFam" id="3.30.1490.10:FF:000002">
    <property type="entry name" value="40S ribosomal protein S15a"/>
    <property type="match status" value="1"/>
</dbReference>
<dbReference type="Gene3D" id="3.30.1370.30">
    <property type="match status" value="1"/>
</dbReference>
<dbReference type="Gene3D" id="3.30.1490.10">
    <property type="match status" value="1"/>
</dbReference>
<dbReference type="HAMAP" id="MF_01302_A">
    <property type="entry name" value="Ribosomal_uS8_A"/>
    <property type="match status" value="1"/>
</dbReference>
<dbReference type="InterPro" id="IPR000630">
    <property type="entry name" value="Ribosomal_uS8"/>
</dbReference>
<dbReference type="InterPro" id="IPR047863">
    <property type="entry name" value="Ribosomal_uS8_CS"/>
</dbReference>
<dbReference type="InterPro" id="IPR035987">
    <property type="entry name" value="Ribosomal_uS8_sf"/>
</dbReference>
<dbReference type="NCBIfam" id="NF003115">
    <property type="entry name" value="PRK04034.1"/>
    <property type="match status" value="1"/>
</dbReference>
<dbReference type="PANTHER" id="PTHR11758">
    <property type="entry name" value="40S RIBOSOMAL PROTEIN S15A"/>
    <property type="match status" value="1"/>
</dbReference>
<dbReference type="Pfam" id="PF00410">
    <property type="entry name" value="Ribosomal_S8"/>
    <property type="match status" value="1"/>
</dbReference>
<dbReference type="SUPFAM" id="SSF56047">
    <property type="entry name" value="Ribosomal protein S8"/>
    <property type="match status" value="1"/>
</dbReference>
<dbReference type="PROSITE" id="PS00053">
    <property type="entry name" value="RIBOSOMAL_S8"/>
    <property type="match status" value="1"/>
</dbReference>
<protein>
    <recommendedName>
        <fullName evidence="1">Small ribosomal subunit protein uS8</fullName>
    </recommendedName>
    <alternativeName>
        <fullName evidence="2">30S ribosomal protein S8</fullName>
    </alternativeName>
</protein>
<gene>
    <name evidence="1" type="primary">rps8</name>
    <name type="ordered locus">TGAM_1987</name>
</gene>
<sequence length="130" mass="14678">MTLLDPLANALSHITNSERVGKKEVYIKPASKLIGEVLRVMQENGYIGEFEFIDDGRAGIYRVQLIGKINKAGAIKPRFPVKAKNYEYWEKRFLPAFEFGILIVSTSQGVMTHKEAREKGIGGRLIAYVY</sequence>
<proteinExistence type="inferred from homology"/>
<accession>C5A270</accession>
<evidence type="ECO:0000255" key="1">
    <source>
        <dbReference type="HAMAP-Rule" id="MF_01302"/>
    </source>
</evidence>
<evidence type="ECO:0000305" key="2"/>
<organism>
    <name type="scientific">Thermococcus gammatolerans (strain DSM 15229 / JCM 11827 / EJ3)</name>
    <dbReference type="NCBI Taxonomy" id="593117"/>
    <lineage>
        <taxon>Archaea</taxon>
        <taxon>Methanobacteriati</taxon>
        <taxon>Methanobacteriota</taxon>
        <taxon>Thermococci</taxon>
        <taxon>Thermococcales</taxon>
        <taxon>Thermococcaceae</taxon>
        <taxon>Thermococcus</taxon>
    </lineage>
</organism>
<feature type="chain" id="PRO_1000214273" description="Small ribosomal subunit protein uS8">
    <location>
        <begin position="1"/>
        <end position="130"/>
    </location>
</feature>
<comment type="function">
    <text evidence="1">One of the primary rRNA binding proteins, it binds directly to 16S rRNA central domain where it helps coordinate assembly of the platform of the 30S subunit.</text>
</comment>
<comment type="subunit">
    <text evidence="1">Part of the 30S ribosomal subunit.</text>
</comment>
<comment type="similarity">
    <text evidence="1">Belongs to the universal ribosomal protein uS8 family.</text>
</comment>
<name>RS8_THEGJ</name>